<organism>
    <name type="scientific">Rattus norvegicus</name>
    <name type="common">Rat</name>
    <dbReference type="NCBI Taxonomy" id="10116"/>
    <lineage>
        <taxon>Eukaryota</taxon>
        <taxon>Metazoa</taxon>
        <taxon>Chordata</taxon>
        <taxon>Craniata</taxon>
        <taxon>Vertebrata</taxon>
        <taxon>Euteleostomi</taxon>
        <taxon>Mammalia</taxon>
        <taxon>Eutheria</taxon>
        <taxon>Euarchontoglires</taxon>
        <taxon>Glires</taxon>
        <taxon>Rodentia</taxon>
        <taxon>Myomorpha</taxon>
        <taxon>Muroidea</taxon>
        <taxon>Muridae</taxon>
        <taxon>Murinae</taxon>
        <taxon>Rattus</taxon>
    </lineage>
</organism>
<comment type="function">
    <text evidence="1">Essential component of the TIM23 complex, a complex that mediates the translocation of transit peptide-containing proteins across the mitochondrial inner membrane. Has a role in the activation of stress-induced mitophagy by protecting PINK1 from OMA1-mediated degradation and facilitating its accumulation at the outer mitochondrial membrane in response to depolarization.</text>
</comment>
<comment type="subunit">
    <text evidence="1">Component of the TIM23 complex at least composed of TIMM23, TIMM17 (TIMM17A or TIMM17B) and TIMM50; within this complex, directly interacts with TIMM50. The complex interacts with the TIMM44 component of the PAM complex and with DNAJC15. Upon mitochondrial depolarization, interacts with PINK1; the interaction is required for PINK1 accumulation at the outer mitochondrial membrane, kinase activation by autophosphorylation and PRKN recruitement to mitochondria.</text>
</comment>
<comment type="subcellular location">
    <subcellularLocation>
        <location evidence="1">Mitochondrion inner membrane</location>
        <topology evidence="2">Multi-pass membrane protein</topology>
    </subcellularLocation>
</comment>
<comment type="similarity">
    <text evidence="3">Belongs to the Tim17/Tim22/Tim23 family.</text>
</comment>
<name>TIM23_RAT</name>
<gene>
    <name type="primary">Timm23</name>
    <name type="synonym">Tim23</name>
</gene>
<evidence type="ECO:0000250" key="1">
    <source>
        <dbReference type="UniProtKB" id="O14925"/>
    </source>
</evidence>
<evidence type="ECO:0000255" key="2"/>
<evidence type="ECO:0000305" key="3"/>
<keyword id="KW-0472">Membrane</keyword>
<keyword id="KW-0496">Mitochondrion</keyword>
<keyword id="KW-0999">Mitochondrion inner membrane</keyword>
<keyword id="KW-0653">Protein transport</keyword>
<keyword id="KW-1185">Reference proteome</keyword>
<keyword id="KW-0811">Translocation</keyword>
<keyword id="KW-0812">Transmembrane</keyword>
<keyword id="KW-1133">Transmembrane helix</keyword>
<keyword id="KW-0813">Transport</keyword>
<sequence length="209" mass="21907">MEGGGGSSNKSTGGLAGFFGAGGAGYSNADLAGVPLTGMNPLSPYLNVDPRYLVQDTDEFILPTGANKTRGRFELAFFTIGGCCMTGAAFGALNGLRLGLKETQSMPWSKPRNVQILNMVTRQGALWANTLGSLALLYSAFGVIIEKTRGAEDDFNTVAAGTMTGMLYKCTGGLRGIARGGLAGLTLTSVYALYNNWEHMKGSLLQQSL</sequence>
<protein>
    <recommendedName>
        <fullName>Mitochondrial import inner membrane translocase subunit Tim23</fullName>
    </recommendedName>
</protein>
<proteinExistence type="evidence at transcript level"/>
<reference key="1">
    <citation type="journal article" date="1998" name="J. Biochem.">
        <title>Identification of the protein import components of the rat mitochondrial inner membrane, rTIM17, rTIM23, and rTIM44.</title>
        <authorList>
            <person name="Ishihara N."/>
            <person name="Mihara K."/>
        </authorList>
    </citation>
    <scope>NUCLEOTIDE SEQUENCE [MRNA]</scope>
    <source>
        <tissue>Liver</tissue>
    </source>
</reference>
<feature type="chain" id="PRO_0000210304" description="Mitochondrial import inner membrane translocase subunit Tim23">
    <location>
        <begin position="1"/>
        <end position="209"/>
    </location>
</feature>
<feature type="transmembrane region" description="Helical" evidence="2">
    <location>
        <begin position="73"/>
        <end position="93"/>
    </location>
</feature>
<feature type="transmembrane region" description="Helical" evidence="2">
    <location>
        <begin position="125"/>
        <end position="145"/>
    </location>
</feature>
<feature type="transmembrane region" description="Helical" evidence="2">
    <location>
        <begin position="181"/>
        <end position="197"/>
    </location>
</feature>
<dbReference type="EMBL" id="AB006451">
    <property type="protein sequence ID" value="BAA21819.1"/>
    <property type="molecule type" value="mRNA"/>
</dbReference>
<dbReference type="PIR" id="JE0154">
    <property type="entry name" value="JE0154"/>
</dbReference>
<dbReference type="RefSeq" id="NP_062225.1">
    <property type="nucleotide sequence ID" value="NM_019352.2"/>
</dbReference>
<dbReference type="SMR" id="O35093"/>
<dbReference type="CORUM" id="O35093"/>
<dbReference type="FunCoup" id="O35093">
    <property type="interactions" value="1642"/>
</dbReference>
<dbReference type="STRING" id="10116.ENSRNOP00000026932"/>
<dbReference type="PhosphoSitePlus" id="O35093"/>
<dbReference type="SwissPalm" id="O35093"/>
<dbReference type="jPOST" id="O35093"/>
<dbReference type="PaxDb" id="10116-ENSRNOP00000026932"/>
<dbReference type="GeneID" id="54312"/>
<dbReference type="KEGG" id="rno:54312"/>
<dbReference type="UCSC" id="RGD:3863">
    <property type="organism name" value="rat"/>
</dbReference>
<dbReference type="AGR" id="RGD:3863"/>
<dbReference type="CTD" id="100287932"/>
<dbReference type="RGD" id="3863">
    <property type="gene designation" value="Timm23"/>
</dbReference>
<dbReference type="eggNOG" id="KOG3324">
    <property type="taxonomic scope" value="Eukaryota"/>
</dbReference>
<dbReference type="InParanoid" id="O35093"/>
<dbReference type="OrthoDB" id="75249at9989"/>
<dbReference type="PhylomeDB" id="O35093"/>
<dbReference type="PRO" id="PR:O35093"/>
<dbReference type="Proteomes" id="UP000002494">
    <property type="component" value="Unplaced"/>
</dbReference>
<dbReference type="GO" id="GO:0140494">
    <property type="term" value="C:migrasome"/>
    <property type="evidence" value="ECO:0000266"/>
    <property type="project" value="RGD"/>
</dbReference>
<dbReference type="GO" id="GO:0005743">
    <property type="term" value="C:mitochondrial inner membrane"/>
    <property type="evidence" value="ECO:0000314"/>
    <property type="project" value="RGD"/>
</dbReference>
<dbReference type="GO" id="GO:0005758">
    <property type="term" value="C:mitochondrial intermembrane space"/>
    <property type="evidence" value="ECO:0000266"/>
    <property type="project" value="RGD"/>
</dbReference>
<dbReference type="GO" id="GO:0005739">
    <property type="term" value="C:mitochondrion"/>
    <property type="evidence" value="ECO:0000266"/>
    <property type="project" value="RGD"/>
</dbReference>
<dbReference type="GO" id="GO:0005744">
    <property type="term" value="C:TIM23 mitochondrial import inner membrane translocase complex"/>
    <property type="evidence" value="ECO:0000266"/>
    <property type="project" value="RGD"/>
</dbReference>
<dbReference type="GO" id="GO:0008320">
    <property type="term" value="F:protein transmembrane transporter activity"/>
    <property type="evidence" value="ECO:0000318"/>
    <property type="project" value="GO_Central"/>
</dbReference>
<dbReference type="GO" id="GO:0006886">
    <property type="term" value="P:intracellular protein transport"/>
    <property type="evidence" value="ECO:0000315"/>
    <property type="project" value="RGD"/>
</dbReference>
<dbReference type="GO" id="GO:0010954">
    <property type="term" value="P:positive regulation of protein processing"/>
    <property type="evidence" value="ECO:0000315"/>
    <property type="project" value="RGD"/>
</dbReference>
<dbReference type="GO" id="GO:0030150">
    <property type="term" value="P:protein import into mitochondrial matrix"/>
    <property type="evidence" value="ECO:0000318"/>
    <property type="project" value="GO_Central"/>
</dbReference>
<dbReference type="GO" id="GO:1905242">
    <property type="term" value="P:response to 3,3',5-triiodo-L-thyronine"/>
    <property type="evidence" value="ECO:0000270"/>
    <property type="project" value="RGD"/>
</dbReference>
<dbReference type="GO" id="GO:0061734">
    <property type="term" value="P:type 2 mitophagy"/>
    <property type="evidence" value="ECO:0000250"/>
    <property type="project" value="UniProtKB"/>
</dbReference>
<dbReference type="InterPro" id="IPR005681">
    <property type="entry name" value="Tim23"/>
</dbReference>
<dbReference type="InterPro" id="IPR045238">
    <property type="entry name" value="Tim23-like"/>
</dbReference>
<dbReference type="NCBIfam" id="TIGR00983">
    <property type="entry name" value="3a0801s02tim23"/>
    <property type="match status" value="1"/>
</dbReference>
<dbReference type="PANTHER" id="PTHR15371:SF39">
    <property type="entry name" value="MITOCHONDRIAL IMPORT INNER MEMBRANE TRANSLOCASE SUBUNIT TIM23"/>
    <property type="match status" value="1"/>
</dbReference>
<dbReference type="PANTHER" id="PTHR15371">
    <property type="entry name" value="TIM23"/>
    <property type="match status" value="1"/>
</dbReference>
<dbReference type="Pfam" id="PF02466">
    <property type="entry name" value="Tim17"/>
    <property type="match status" value="1"/>
</dbReference>
<accession>O35093</accession>